<accession>Q2FVK8</accession>
<sequence length="228" mass="26680">MPKLILCRHGQSEWNAKNLFTGWEDVNLSEQGINEATRAGEKVRENNIAIDVAFTSLLTRALDTTHYILTESKQQWIPVYKSWRLNERHYGGLQGLNKDDARKEFGEEQVHIWRRSYDVKPPAETEEQREAYLADRRYNHLDKRMMPYSESLKDTLVRVIPFWTDHISQYLLDGQTVLVSAHGNSIRALIKYLEDVSDEDIINYEIKTGAPLVYELTDDLEVIDKYYL</sequence>
<evidence type="ECO:0000255" key="1">
    <source>
        <dbReference type="HAMAP-Rule" id="MF_01039"/>
    </source>
</evidence>
<dbReference type="EC" id="5.4.2.11" evidence="1"/>
<dbReference type="EMBL" id="CP000253">
    <property type="protein sequence ID" value="ABD31711.1"/>
    <property type="molecule type" value="Genomic_DNA"/>
</dbReference>
<dbReference type="RefSeq" id="WP_001125208.1">
    <property type="nucleotide sequence ID" value="NZ_LS483365.1"/>
</dbReference>
<dbReference type="RefSeq" id="YP_501165.1">
    <property type="nucleotide sequence ID" value="NC_007795.1"/>
</dbReference>
<dbReference type="SMR" id="Q2FVK8"/>
<dbReference type="STRING" id="93061.SAOUHSC_02703"/>
<dbReference type="PaxDb" id="1280-SAXN108_2671"/>
<dbReference type="GeneID" id="3919722"/>
<dbReference type="KEGG" id="sao:SAOUHSC_02703"/>
<dbReference type="PATRIC" id="fig|93061.5.peg.2448"/>
<dbReference type="eggNOG" id="COG0588">
    <property type="taxonomic scope" value="Bacteria"/>
</dbReference>
<dbReference type="HOGENOM" id="CLU_033323_1_5_9"/>
<dbReference type="OrthoDB" id="9781415at2"/>
<dbReference type="UniPathway" id="UPA00109">
    <property type="reaction ID" value="UER00186"/>
</dbReference>
<dbReference type="PRO" id="PR:Q2FVK8"/>
<dbReference type="Proteomes" id="UP000008816">
    <property type="component" value="Chromosome"/>
</dbReference>
<dbReference type="GO" id="GO:0004619">
    <property type="term" value="F:phosphoglycerate mutase activity"/>
    <property type="evidence" value="ECO:0007669"/>
    <property type="project" value="UniProtKB-EC"/>
</dbReference>
<dbReference type="GO" id="GO:0006094">
    <property type="term" value="P:gluconeogenesis"/>
    <property type="evidence" value="ECO:0007669"/>
    <property type="project" value="UniProtKB-UniRule"/>
</dbReference>
<dbReference type="GO" id="GO:0006096">
    <property type="term" value="P:glycolytic process"/>
    <property type="evidence" value="ECO:0007669"/>
    <property type="project" value="UniProtKB-UniRule"/>
</dbReference>
<dbReference type="CDD" id="cd07067">
    <property type="entry name" value="HP_PGM_like"/>
    <property type="match status" value="1"/>
</dbReference>
<dbReference type="FunFam" id="3.40.50.1240:FF:000003">
    <property type="entry name" value="2,3-bisphosphoglycerate-dependent phosphoglycerate mutase"/>
    <property type="match status" value="1"/>
</dbReference>
<dbReference type="Gene3D" id="3.40.50.1240">
    <property type="entry name" value="Phosphoglycerate mutase-like"/>
    <property type="match status" value="1"/>
</dbReference>
<dbReference type="HAMAP" id="MF_01039">
    <property type="entry name" value="PGAM_GpmA"/>
    <property type="match status" value="1"/>
</dbReference>
<dbReference type="InterPro" id="IPR013078">
    <property type="entry name" value="His_Pase_superF_clade-1"/>
</dbReference>
<dbReference type="InterPro" id="IPR029033">
    <property type="entry name" value="His_PPase_superfam"/>
</dbReference>
<dbReference type="InterPro" id="IPR001345">
    <property type="entry name" value="PG/BPGM_mutase_AS"/>
</dbReference>
<dbReference type="InterPro" id="IPR005952">
    <property type="entry name" value="Phosphogly_mut1"/>
</dbReference>
<dbReference type="NCBIfam" id="TIGR01258">
    <property type="entry name" value="pgm_1"/>
    <property type="match status" value="1"/>
</dbReference>
<dbReference type="NCBIfam" id="NF010713">
    <property type="entry name" value="PRK14115.1"/>
    <property type="match status" value="1"/>
</dbReference>
<dbReference type="NCBIfam" id="NF010717">
    <property type="entry name" value="PRK14119.1"/>
    <property type="match status" value="1"/>
</dbReference>
<dbReference type="PANTHER" id="PTHR11931">
    <property type="entry name" value="PHOSPHOGLYCERATE MUTASE"/>
    <property type="match status" value="1"/>
</dbReference>
<dbReference type="Pfam" id="PF00300">
    <property type="entry name" value="His_Phos_1"/>
    <property type="match status" value="1"/>
</dbReference>
<dbReference type="PIRSF" id="PIRSF000709">
    <property type="entry name" value="6PFK_2-Ptase"/>
    <property type="match status" value="1"/>
</dbReference>
<dbReference type="SMART" id="SM00855">
    <property type="entry name" value="PGAM"/>
    <property type="match status" value="1"/>
</dbReference>
<dbReference type="SUPFAM" id="SSF53254">
    <property type="entry name" value="Phosphoglycerate mutase-like"/>
    <property type="match status" value="1"/>
</dbReference>
<dbReference type="PROSITE" id="PS00175">
    <property type="entry name" value="PG_MUTASE"/>
    <property type="match status" value="1"/>
</dbReference>
<keyword id="KW-0312">Gluconeogenesis</keyword>
<keyword id="KW-0324">Glycolysis</keyword>
<keyword id="KW-0413">Isomerase</keyword>
<keyword id="KW-1185">Reference proteome</keyword>
<reference key="1">
    <citation type="book" date="2006" name="Gram positive pathogens, 2nd edition">
        <title>The Staphylococcus aureus NCTC 8325 genome.</title>
        <editorList>
            <person name="Fischetti V."/>
            <person name="Novick R."/>
            <person name="Ferretti J."/>
            <person name="Portnoy D."/>
            <person name="Rood J."/>
        </editorList>
        <authorList>
            <person name="Gillaspy A.F."/>
            <person name="Worrell V."/>
            <person name="Orvis J."/>
            <person name="Roe B.A."/>
            <person name="Dyer D.W."/>
            <person name="Iandolo J.J."/>
        </authorList>
    </citation>
    <scope>NUCLEOTIDE SEQUENCE [LARGE SCALE GENOMIC DNA]</scope>
    <source>
        <strain>NCTC 8325 / PS 47</strain>
    </source>
</reference>
<name>GPMA_STAA8</name>
<proteinExistence type="inferred from homology"/>
<feature type="chain" id="PRO_1000064103" description="2,3-bisphosphoglycerate-dependent phosphoglycerate mutase">
    <location>
        <begin position="1"/>
        <end position="228"/>
    </location>
</feature>
<feature type="active site" description="Tele-phosphohistidine intermediate" evidence="1">
    <location>
        <position position="9"/>
    </location>
</feature>
<feature type="active site" description="Proton donor/acceptor" evidence="1">
    <location>
        <position position="87"/>
    </location>
</feature>
<feature type="binding site" evidence="1">
    <location>
        <begin position="8"/>
        <end position="15"/>
    </location>
    <ligand>
        <name>substrate</name>
    </ligand>
</feature>
<feature type="binding site" evidence="1">
    <location>
        <begin position="21"/>
        <end position="22"/>
    </location>
    <ligand>
        <name>substrate</name>
    </ligand>
</feature>
<feature type="binding site" evidence="1">
    <location>
        <position position="60"/>
    </location>
    <ligand>
        <name>substrate</name>
    </ligand>
</feature>
<feature type="binding site" evidence="1">
    <location>
        <begin position="87"/>
        <end position="90"/>
    </location>
    <ligand>
        <name>substrate</name>
    </ligand>
</feature>
<feature type="binding site" evidence="1">
    <location>
        <position position="98"/>
    </location>
    <ligand>
        <name>substrate</name>
    </ligand>
</feature>
<feature type="binding site" evidence="1">
    <location>
        <begin position="114"/>
        <end position="115"/>
    </location>
    <ligand>
        <name>substrate</name>
    </ligand>
</feature>
<feature type="binding site" evidence="1">
    <location>
        <begin position="183"/>
        <end position="184"/>
    </location>
    <ligand>
        <name>substrate</name>
    </ligand>
</feature>
<feature type="site" description="Transition state stabilizer" evidence="1">
    <location>
        <position position="182"/>
    </location>
</feature>
<organism>
    <name type="scientific">Staphylococcus aureus (strain NCTC 8325 / PS 47)</name>
    <dbReference type="NCBI Taxonomy" id="93061"/>
    <lineage>
        <taxon>Bacteria</taxon>
        <taxon>Bacillati</taxon>
        <taxon>Bacillota</taxon>
        <taxon>Bacilli</taxon>
        <taxon>Bacillales</taxon>
        <taxon>Staphylococcaceae</taxon>
        <taxon>Staphylococcus</taxon>
    </lineage>
</organism>
<protein>
    <recommendedName>
        <fullName evidence="1">2,3-bisphosphoglycerate-dependent phosphoglycerate mutase</fullName>
        <shortName evidence="1">BPG-dependent PGAM</shortName>
        <shortName evidence="1">PGAM</shortName>
        <shortName evidence="1">Phosphoglyceromutase</shortName>
        <shortName evidence="1">dPGM</shortName>
        <ecNumber evidence="1">5.4.2.11</ecNumber>
    </recommendedName>
</protein>
<gene>
    <name evidence="1" type="primary">gpmA</name>
    <name type="ordered locus">SAOUHSC_02703</name>
</gene>
<comment type="function">
    <text evidence="1">Catalyzes the interconversion of 2-phosphoglycerate and 3-phosphoglycerate.</text>
</comment>
<comment type="catalytic activity">
    <reaction evidence="1">
        <text>(2R)-2-phosphoglycerate = (2R)-3-phosphoglycerate</text>
        <dbReference type="Rhea" id="RHEA:15901"/>
        <dbReference type="ChEBI" id="CHEBI:58272"/>
        <dbReference type="ChEBI" id="CHEBI:58289"/>
        <dbReference type="EC" id="5.4.2.11"/>
    </reaction>
</comment>
<comment type="pathway">
    <text evidence="1">Carbohydrate degradation; glycolysis; pyruvate from D-glyceraldehyde 3-phosphate: step 3/5.</text>
</comment>
<comment type="similarity">
    <text evidence="1">Belongs to the phosphoglycerate mutase family. BPG-dependent PGAM subfamily.</text>
</comment>